<name>ESM1_DROSI</name>
<feature type="signal peptide" evidence="2">
    <location>
        <begin position="1"/>
        <end position="19"/>
    </location>
</feature>
<feature type="chain" id="PRO_0000423185" description="Enhancer of split M1 protein" evidence="2">
    <location>
        <begin position="20"/>
        <end position="156"/>
    </location>
</feature>
<feature type="domain" description="Kazal-like 1" evidence="3">
    <location>
        <begin position="23"/>
        <end position="81"/>
    </location>
</feature>
<feature type="domain" description="Kazal-like 2" evidence="3">
    <location>
        <begin position="96"/>
        <end position="156"/>
    </location>
</feature>
<feature type="site" description="Reactive bond" evidence="3">
    <location>
        <begin position="35"/>
        <end position="36"/>
    </location>
</feature>
<feature type="site" description="Reactive bond" evidence="3">
    <location>
        <begin position="108"/>
        <end position="109"/>
    </location>
</feature>
<feature type="disulfide bond" evidence="3">
    <location>
        <begin position="29"/>
        <end position="62"/>
    </location>
</feature>
<feature type="disulfide bond" evidence="3">
    <location>
        <begin position="33"/>
        <end position="55"/>
    </location>
</feature>
<feature type="disulfide bond" evidence="3">
    <location>
        <begin position="102"/>
        <end position="135"/>
    </location>
</feature>
<feature type="disulfide bond" evidence="3">
    <location>
        <begin position="106"/>
        <end position="128"/>
    </location>
</feature>
<feature type="disulfide bond" evidence="3">
    <location>
        <begin position="114"/>
        <end position="156"/>
    </location>
</feature>
<sequence>MMSQTLTLCCLGLVACVYGNTVSTNDTACPTFCPSIYKPVCGTDGQNFKEFASTCNLLSHNCRRERNSVQAYAATDAAWCSSEFVENLHEKLGNFKLEVKECFKPCSMIYQPVCITNGKYRAELANSCLLENFNCALQVSGAQPAELFRLLREEKC</sequence>
<protein>
    <recommendedName>
        <fullName evidence="5">Enhancer of split M1 protein</fullName>
        <shortName evidence="5">E(spl)m1</shortName>
    </recommendedName>
    <alternativeName>
        <fullName evidence="1">Kazal-type protease inhibitor m1</fullName>
    </alternativeName>
</protein>
<proteinExistence type="inferred from homology"/>
<organism>
    <name type="scientific">Drosophila simulans</name>
    <name type="common">Fruit fly</name>
    <dbReference type="NCBI Taxonomy" id="7240"/>
    <lineage>
        <taxon>Eukaryota</taxon>
        <taxon>Metazoa</taxon>
        <taxon>Ecdysozoa</taxon>
        <taxon>Arthropoda</taxon>
        <taxon>Hexapoda</taxon>
        <taxon>Insecta</taxon>
        <taxon>Pterygota</taxon>
        <taxon>Neoptera</taxon>
        <taxon>Endopterygota</taxon>
        <taxon>Diptera</taxon>
        <taxon>Brachycera</taxon>
        <taxon>Muscomorpha</taxon>
        <taxon>Ephydroidea</taxon>
        <taxon>Drosophilidae</taxon>
        <taxon>Drosophila</taxon>
        <taxon>Sophophora</taxon>
    </lineage>
</organism>
<evidence type="ECO:0000250" key="1">
    <source>
        <dbReference type="UniProtKB" id="O97176"/>
    </source>
</evidence>
<evidence type="ECO:0000255" key="2"/>
<evidence type="ECO:0000255" key="3">
    <source>
        <dbReference type="PROSITE-ProRule" id="PRU00798"/>
    </source>
</evidence>
<evidence type="ECO:0000269" key="4">
    <source>
    </source>
</evidence>
<evidence type="ECO:0000303" key="5">
    <source>
    </source>
</evidence>
<evidence type="ECO:0000305" key="6"/>
<evidence type="ECO:0000312" key="7">
    <source>
        <dbReference type="EMBL" id="AAV59245.1"/>
    </source>
</evidence>
<evidence type="ECO:0000312" key="8">
    <source>
        <dbReference type="EMBL" id="EDX14510.1"/>
    </source>
</evidence>
<accession>B4QW11</accession>
<dbReference type="EMBL" id="AY779922">
    <property type="protein sequence ID" value="AAV59245.1"/>
    <property type="molecule type" value="Genomic_DNA"/>
</dbReference>
<dbReference type="EMBL" id="CM000364">
    <property type="protein sequence ID" value="EDX14510.1"/>
    <property type="molecule type" value="Genomic_DNA"/>
</dbReference>
<dbReference type="STRING" id="7240.B4QW11"/>
<dbReference type="EnsemblMetazoa" id="FBtr0221170">
    <property type="protein sequence ID" value="FBpp0219662"/>
    <property type="gene ID" value="FBgn0082722"/>
</dbReference>
<dbReference type="EnsemblMetazoa" id="XM_002104971.4">
    <property type="protein sequence ID" value="XP_002105007.1"/>
    <property type="gene ID" value="LOC6729701"/>
</dbReference>
<dbReference type="GeneID" id="6729701"/>
<dbReference type="KEGG" id="dsi:Dsimw501_GD21260"/>
<dbReference type="CTD" id="43154"/>
<dbReference type="HOGENOM" id="CLU_1604439_0_0_1"/>
<dbReference type="OMA" id="LEVQECF"/>
<dbReference type="OrthoDB" id="88467at2759"/>
<dbReference type="PhylomeDB" id="B4QW11"/>
<dbReference type="Proteomes" id="UP000000304">
    <property type="component" value="Chromosome 3R"/>
</dbReference>
<dbReference type="Bgee" id="FBgn0082722">
    <property type="expression patterns" value="Expressed in embryo and 3 other cell types or tissues"/>
</dbReference>
<dbReference type="GO" id="GO:0004867">
    <property type="term" value="F:serine-type endopeptidase inhibitor activity"/>
    <property type="evidence" value="ECO:0007669"/>
    <property type="project" value="UniProtKB-KW"/>
</dbReference>
<dbReference type="CDD" id="cd00104">
    <property type="entry name" value="KAZAL_FS"/>
    <property type="match status" value="1"/>
</dbReference>
<dbReference type="FunFam" id="3.30.60.30:FF:000079">
    <property type="entry name" value="Enhancer of split M1 protein"/>
    <property type="match status" value="1"/>
</dbReference>
<dbReference type="Gene3D" id="3.30.60.30">
    <property type="match status" value="2"/>
</dbReference>
<dbReference type="InterPro" id="IPR002350">
    <property type="entry name" value="Kazal_dom"/>
</dbReference>
<dbReference type="InterPro" id="IPR036058">
    <property type="entry name" value="Kazal_dom_sf"/>
</dbReference>
<dbReference type="Pfam" id="PF07648">
    <property type="entry name" value="Kazal_2"/>
    <property type="match status" value="2"/>
</dbReference>
<dbReference type="SMART" id="SM00280">
    <property type="entry name" value="KAZAL"/>
    <property type="match status" value="2"/>
</dbReference>
<dbReference type="SUPFAM" id="SSF100895">
    <property type="entry name" value="Kazal-type serine protease inhibitors"/>
    <property type="match status" value="1"/>
</dbReference>
<dbReference type="PROSITE" id="PS51465">
    <property type="entry name" value="KAZAL_2"/>
    <property type="match status" value="2"/>
</dbReference>
<keyword id="KW-1015">Disulfide bond</keyword>
<keyword id="KW-0646">Protease inhibitor</keyword>
<keyword id="KW-1185">Reference proteome</keyword>
<keyword id="KW-0677">Repeat</keyword>
<keyword id="KW-0722">Serine protease inhibitor</keyword>
<keyword id="KW-0732">Signal</keyword>
<gene>
    <name evidence="1" type="primary">Kaz-m1</name>
    <name type="synonym">m1</name>
    <name type="ORF">GD21260</name>
</gene>
<reference evidence="6 7" key="1">
    <citation type="journal article" date="2005" name="Mol. Biol. Evol.">
        <title>Identifying signatures of selection at the enhancer of split neurogenic gene complex in Drosophila.</title>
        <authorList>
            <person name="Macdonald S.J."/>
            <person name="Long A.D."/>
        </authorList>
    </citation>
    <scope>NUCLEOTIDE SEQUENCE [GENOMIC DNA]</scope>
    <source>
        <strain evidence="4">sim6</strain>
    </source>
</reference>
<reference evidence="8" key="2">
    <citation type="journal article" date="2007" name="Nature">
        <title>Evolution of genes and genomes on the Drosophila phylogeny.</title>
        <authorList>
            <consortium name="Drosophila 12 genomes consortium"/>
        </authorList>
    </citation>
    <scope>NUCLEOTIDE SEQUENCE [LARGE SCALE GENOMIC DNA]</scope>
</reference>